<gene>
    <name evidence="1" type="primary">rbfA</name>
    <name type="ordered locus">HP_1047</name>
</gene>
<proteinExistence type="inferred from homology"/>
<name>RBFA_HELPY</name>
<protein>
    <recommendedName>
        <fullName evidence="1">Ribosome-binding factor A</fullName>
    </recommendedName>
</protein>
<feature type="chain" id="PRO_0000102672" description="Ribosome-binding factor A">
    <location>
        <begin position="1"/>
        <end position="111"/>
    </location>
</feature>
<dbReference type="EMBL" id="AE000511">
    <property type="protein sequence ID" value="AAD08092.1"/>
    <property type="molecule type" value="Genomic_DNA"/>
</dbReference>
<dbReference type="PIR" id="G64650">
    <property type="entry name" value="G64650"/>
</dbReference>
<dbReference type="RefSeq" id="NP_207838.1">
    <property type="nucleotide sequence ID" value="NC_000915.1"/>
</dbReference>
<dbReference type="RefSeq" id="WP_000991190.1">
    <property type="nucleotide sequence ID" value="NC_018939.1"/>
</dbReference>
<dbReference type="SMR" id="O25688"/>
<dbReference type="IntAct" id="O25688">
    <property type="interactions" value="1"/>
</dbReference>
<dbReference type="STRING" id="85962.HP_1047"/>
<dbReference type="PaxDb" id="85962-C694_05415"/>
<dbReference type="EnsemblBacteria" id="AAD08092">
    <property type="protein sequence ID" value="AAD08092"/>
    <property type="gene ID" value="HP_1047"/>
</dbReference>
<dbReference type="KEGG" id="heo:C694_05415"/>
<dbReference type="KEGG" id="hpy:HP_1047"/>
<dbReference type="PATRIC" id="fig|85962.47.peg.1126"/>
<dbReference type="eggNOG" id="COG0858">
    <property type="taxonomic scope" value="Bacteria"/>
</dbReference>
<dbReference type="InParanoid" id="O25688"/>
<dbReference type="OrthoDB" id="5339518at2"/>
<dbReference type="Proteomes" id="UP000000429">
    <property type="component" value="Chromosome"/>
</dbReference>
<dbReference type="GO" id="GO:0005737">
    <property type="term" value="C:cytoplasm"/>
    <property type="evidence" value="ECO:0007669"/>
    <property type="project" value="UniProtKB-SubCell"/>
</dbReference>
<dbReference type="GO" id="GO:0030490">
    <property type="term" value="P:maturation of SSU-rRNA"/>
    <property type="evidence" value="ECO:0007669"/>
    <property type="project" value="UniProtKB-UniRule"/>
</dbReference>
<dbReference type="Gene3D" id="3.30.300.20">
    <property type="match status" value="1"/>
</dbReference>
<dbReference type="HAMAP" id="MF_00003">
    <property type="entry name" value="RbfA"/>
    <property type="match status" value="1"/>
</dbReference>
<dbReference type="InterPro" id="IPR015946">
    <property type="entry name" value="KH_dom-like_a/b"/>
</dbReference>
<dbReference type="InterPro" id="IPR000238">
    <property type="entry name" value="RbfA"/>
</dbReference>
<dbReference type="InterPro" id="IPR023799">
    <property type="entry name" value="RbfA_dom_sf"/>
</dbReference>
<dbReference type="InterPro" id="IPR020053">
    <property type="entry name" value="Ribosome-bd_factorA_CS"/>
</dbReference>
<dbReference type="NCBIfam" id="TIGR00082">
    <property type="entry name" value="rbfA"/>
    <property type="match status" value="1"/>
</dbReference>
<dbReference type="Pfam" id="PF02033">
    <property type="entry name" value="RBFA"/>
    <property type="match status" value="1"/>
</dbReference>
<dbReference type="SUPFAM" id="SSF89919">
    <property type="entry name" value="Ribosome-binding factor A, RbfA"/>
    <property type="match status" value="1"/>
</dbReference>
<dbReference type="PROSITE" id="PS01319">
    <property type="entry name" value="RBFA"/>
    <property type="match status" value="1"/>
</dbReference>
<evidence type="ECO:0000255" key="1">
    <source>
        <dbReference type="HAMAP-Rule" id="MF_00003"/>
    </source>
</evidence>
<comment type="function">
    <text evidence="1">One of several proteins that assist in the late maturation steps of the functional core of the 30S ribosomal subunit. Associates with free 30S ribosomal subunits (but not with 30S subunits that are part of 70S ribosomes or polysomes). Required for efficient processing of 16S rRNA. May interact with the 5'-terminal helix region of 16S rRNA.</text>
</comment>
<comment type="subunit">
    <text evidence="1">Monomer. Binds 30S ribosomal subunits, but not 50S ribosomal subunits or 70S ribosomes.</text>
</comment>
<comment type="subcellular location">
    <subcellularLocation>
        <location evidence="1">Cytoplasm</location>
    </subcellularLocation>
</comment>
<comment type="similarity">
    <text evidence="1">Belongs to the RbfA family.</text>
</comment>
<accession>O25688</accession>
<sequence length="111" mass="12499">MNAHKERLESNLLELLQEALASLNDSELNSLSVTKVECSKGKHHAYVFVLSSDHKILSKLKKAEGLIRQFVLQASGWFKCPKLSFVSDNSLEKQLRLDAIFNEIAKGKDND</sequence>
<organism>
    <name type="scientific">Helicobacter pylori (strain ATCC 700392 / 26695)</name>
    <name type="common">Campylobacter pylori</name>
    <dbReference type="NCBI Taxonomy" id="85962"/>
    <lineage>
        <taxon>Bacteria</taxon>
        <taxon>Pseudomonadati</taxon>
        <taxon>Campylobacterota</taxon>
        <taxon>Epsilonproteobacteria</taxon>
        <taxon>Campylobacterales</taxon>
        <taxon>Helicobacteraceae</taxon>
        <taxon>Helicobacter</taxon>
    </lineage>
</organism>
<keyword id="KW-0963">Cytoplasm</keyword>
<keyword id="KW-1185">Reference proteome</keyword>
<keyword id="KW-0690">Ribosome biogenesis</keyword>
<reference key="1">
    <citation type="journal article" date="1997" name="Nature">
        <title>The complete genome sequence of the gastric pathogen Helicobacter pylori.</title>
        <authorList>
            <person name="Tomb J.-F."/>
            <person name="White O."/>
            <person name="Kerlavage A.R."/>
            <person name="Clayton R.A."/>
            <person name="Sutton G.G."/>
            <person name="Fleischmann R.D."/>
            <person name="Ketchum K.A."/>
            <person name="Klenk H.-P."/>
            <person name="Gill S.R."/>
            <person name="Dougherty B.A."/>
            <person name="Nelson K.E."/>
            <person name="Quackenbush J."/>
            <person name="Zhou L."/>
            <person name="Kirkness E.F."/>
            <person name="Peterson S.N."/>
            <person name="Loftus B.J."/>
            <person name="Richardson D.L."/>
            <person name="Dodson R.J."/>
            <person name="Khalak H.G."/>
            <person name="Glodek A."/>
            <person name="McKenney K."/>
            <person name="FitzGerald L.M."/>
            <person name="Lee N."/>
            <person name="Adams M.D."/>
            <person name="Hickey E.K."/>
            <person name="Berg D.E."/>
            <person name="Gocayne J.D."/>
            <person name="Utterback T.R."/>
            <person name="Peterson J.D."/>
            <person name="Kelley J.M."/>
            <person name="Cotton M.D."/>
            <person name="Weidman J.F."/>
            <person name="Fujii C."/>
            <person name="Bowman C."/>
            <person name="Watthey L."/>
            <person name="Wallin E."/>
            <person name="Hayes W.S."/>
            <person name="Borodovsky M."/>
            <person name="Karp P.D."/>
            <person name="Smith H.O."/>
            <person name="Fraser C.M."/>
            <person name="Venter J.C."/>
        </authorList>
    </citation>
    <scope>NUCLEOTIDE SEQUENCE [LARGE SCALE GENOMIC DNA]</scope>
    <source>
        <strain>ATCC 700392 / 26695</strain>
    </source>
</reference>